<keyword id="KW-0072">Autophagy</keyword>
<keyword id="KW-0963">Cytoplasm</keyword>
<keyword id="KW-0968">Cytoplasmic vesicle</keyword>
<keyword id="KW-0206">Cytoskeleton</keyword>
<keyword id="KW-0967">Endosome</keyword>
<keyword id="KW-0333">Golgi apparatus</keyword>
<keyword id="KW-0446">Lipid-binding</keyword>
<keyword id="KW-0472">Membrane</keyword>
<keyword id="KW-1185">Reference proteome</keyword>
<keyword id="KW-0677">Repeat</keyword>
<keyword id="KW-0853">WD repeat</keyword>
<protein>
    <recommendedName>
        <fullName>WD repeat domain phosphoinositide-interacting protein 1</fullName>
        <shortName>WIPI-1</shortName>
    </recommendedName>
</protein>
<organism>
    <name type="scientific">Xenopus laevis</name>
    <name type="common">African clawed frog</name>
    <dbReference type="NCBI Taxonomy" id="8355"/>
    <lineage>
        <taxon>Eukaryota</taxon>
        <taxon>Metazoa</taxon>
        <taxon>Chordata</taxon>
        <taxon>Craniata</taxon>
        <taxon>Vertebrata</taxon>
        <taxon>Euteleostomi</taxon>
        <taxon>Amphibia</taxon>
        <taxon>Batrachia</taxon>
        <taxon>Anura</taxon>
        <taxon>Pipoidea</taxon>
        <taxon>Pipidae</taxon>
        <taxon>Xenopodinae</taxon>
        <taxon>Xenopus</taxon>
        <taxon>Xenopus</taxon>
    </lineage>
</organism>
<name>WIPI1_XENLA</name>
<feature type="chain" id="PRO_0000051439" description="WD repeat domain phosphoinositide-interacting protein 1">
    <location>
        <begin position="1"/>
        <end position="433"/>
    </location>
</feature>
<feature type="repeat" description="WD 1">
    <location>
        <begin position="136"/>
        <end position="177"/>
    </location>
</feature>
<feature type="repeat" description="WD 2">
    <location>
        <begin position="180"/>
        <end position="220"/>
    </location>
</feature>
<feature type="repeat" description="WD 3">
    <location>
        <begin position="226"/>
        <end position="265"/>
    </location>
</feature>
<feature type="repeat" description="WD 4">
    <location>
        <begin position="296"/>
        <end position="346"/>
    </location>
</feature>
<feature type="short sequence motif" description="Nuclear receptor interaction" evidence="1">
    <location>
        <begin position="127"/>
        <end position="132"/>
    </location>
</feature>
<feature type="short sequence motif" description="L/FRRG motif" evidence="2">
    <location>
        <begin position="221"/>
        <end position="224"/>
    </location>
</feature>
<evidence type="ECO:0000250" key="1">
    <source>
        <dbReference type="UniProtKB" id="Q5MNZ9"/>
    </source>
</evidence>
<evidence type="ECO:0000250" key="2">
    <source>
        <dbReference type="UniProtKB" id="Q9Y4P8"/>
    </source>
</evidence>
<evidence type="ECO:0000305" key="3"/>
<comment type="function">
    <text evidence="1">Component of the autophagy machinery that controls the major intracellular degradation process by which cytoplasmic materials are packaged into autophagosomes and delivered to lysosomes for degradation. Plays an important role in starvation- and calcium-mediated autophagy, as well as in mitophagy. Functions downstream of the ulk1 and PI3-kinases that produce phosphatidylinositol 3-phosphate (PtdIns3P) on membranes of the endoplasmic reticulum once activated. Binds phosphatidylinositol 3-phosphate (PtdIns3P), and maybe other phosphoinositides including PtdIns3,5P2 and PtdIns5P, and is recruited to phagophore assembly sites at the endoplasmic reticulum membranes. There, it assists wipi2 in the recruitment of atg12-atg5-atg16l1, a complex that directly controls the elongation of the nascent autophagosomal membrane. Together with wdr45/wipi4, promotes atg2 (atg2a or atg2b)-mediated lipid transfer by enhancing atg2-association with phosphatidylinositol 3-monophosphate (PI3P)-containing membranes.</text>
</comment>
<comment type="subcellular location">
    <subcellularLocation>
        <location evidence="1">Golgi apparatus</location>
        <location evidence="1">trans-Golgi network</location>
    </subcellularLocation>
    <subcellularLocation>
        <location evidence="1">Endosome</location>
    </subcellularLocation>
    <subcellularLocation>
        <location evidence="1">Cytoplasmic vesicle</location>
        <location evidence="1">Clathrin-coated vesicle</location>
    </subcellularLocation>
    <subcellularLocation>
        <location evidence="1">Preautophagosomal structure membrane</location>
        <topology evidence="1">Peripheral membrane protein</topology>
    </subcellularLocation>
    <subcellularLocation>
        <location evidence="1">Cytoplasm</location>
        <location evidence="1">Cytoskeleton</location>
    </subcellularLocation>
</comment>
<comment type="domain">
    <text evidence="1">The N-terminus might form a beta-propeller domain involved in specific binding to phosphatidylinositol 3,5-bisphosphate (PIP2), leading to the association of the protein to the membrane. Association to the membrane can also occur through binding to phosphatidylinositol 3-monophosphate (PI3P) (By similarity).</text>
</comment>
<comment type="domain">
    <text evidence="2">The L/FRRG motif is required for recruitment to PtdIns3P.</text>
</comment>
<comment type="similarity">
    <text evidence="3">Belongs to the WD repeat PROPPIN family.</text>
</comment>
<proteinExistence type="evidence at transcript level"/>
<sequence>METGGGGDGTGDICCLSYNQDCTSVAIGMRSGYKLYSLSNVERLDLVHESCEAKDVYIVERLFSSSLVVVVSHAKPRQMNVLHFKKGTEICNYNYSDNILSIRLNRQRLIVCLEESIYIHNIKDMKLLKTLLDTPRNPHGLCTLSINHSNSYLAYPGSSSTGEVSLYDANCLKCECTIPAHDSPLAAIAFNSTGTKLASASEKGTVIRVFSIPDGQKLYEFRRGMKRYVNISSLVFSMDSQFLCASSNTETVHVFKLEQLPERSEENASWTGYMGKMFMAASNYLPTQVSDMMNQDRAFATVRLNFSGQKNACTLVTIQKLPRLLVTSSSGHLYVYNLDPQDGGECVLIKKHSLLGSAKSETDGDSDAESPVPVSYAATVARPSSAPALSTITGYSEDGGTLRGEVIPEHELAVGPVCLDDEKEFPPVSIKNP</sequence>
<reference key="1">
    <citation type="submission" date="2004-07" db="EMBL/GenBank/DDBJ databases">
        <authorList>
            <consortium name="NIH - Xenopus Gene Collection (XGC) project"/>
        </authorList>
    </citation>
    <scope>NUCLEOTIDE SEQUENCE [LARGE SCALE MRNA]</scope>
    <source>
        <tissue>Embryo</tissue>
    </source>
</reference>
<accession>Q6DCN1</accession>
<gene>
    <name type="primary">wipi1</name>
</gene>
<dbReference type="EMBL" id="BC077974">
    <property type="protein sequence ID" value="AAH77974.1"/>
    <property type="molecule type" value="mRNA"/>
</dbReference>
<dbReference type="RefSeq" id="NP_001087066.1">
    <property type="nucleotide sequence ID" value="NM_001093597.1"/>
</dbReference>
<dbReference type="SMR" id="Q6DCN1"/>
<dbReference type="DNASU" id="446901"/>
<dbReference type="GeneID" id="446901"/>
<dbReference type="KEGG" id="xla:446901"/>
<dbReference type="AGR" id="Xenbase:XB-GENE-5920775"/>
<dbReference type="CTD" id="446901"/>
<dbReference type="Xenbase" id="XB-GENE-5920775">
    <property type="gene designation" value="wipi1.S"/>
</dbReference>
<dbReference type="OMA" id="SHETIKF"/>
<dbReference type="OrthoDB" id="1667587at2759"/>
<dbReference type="Proteomes" id="UP000186698">
    <property type="component" value="Chromosome 9_10S"/>
</dbReference>
<dbReference type="Bgee" id="446901">
    <property type="expression patterns" value="Expressed in internal ear and 19 other cell types or tissues"/>
</dbReference>
<dbReference type="GO" id="GO:0030136">
    <property type="term" value="C:clathrin-coated vesicle"/>
    <property type="evidence" value="ECO:0007669"/>
    <property type="project" value="UniProtKB-SubCell"/>
</dbReference>
<dbReference type="GO" id="GO:0005856">
    <property type="term" value="C:cytoskeleton"/>
    <property type="evidence" value="ECO:0007669"/>
    <property type="project" value="UniProtKB-SubCell"/>
</dbReference>
<dbReference type="GO" id="GO:0005829">
    <property type="term" value="C:cytosol"/>
    <property type="evidence" value="ECO:0000318"/>
    <property type="project" value="GO_Central"/>
</dbReference>
<dbReference type="GO" id="GO:0005768">
    <property type="term" value="C:endosome"/>
    <property type="evidence" value="ECO:0007669"/>
    <property type="project" value="UniProtKB-SubCell"/>
</dbReference>
<dbReference type="GO" id="GO:0005794">
    <property type="term" value="C:Golgi apparatus"/>
    <property type="evidence" value="ECO:0007669"/>
    <property type="project" value="UniProtKB-SubCell"/>
</dbReference>
<dbReference type="GO" id="GO:0000407">
    <property type="term" value="C:phagophore assembly site"/>
    <property type="evidence" value="ECO:0000250"/>
    <property type="project" value="UniProtKB"/>
</dbReference>
<dbReference type="GO" id="GO:0034045">
    <property type="term" value="C:phagophore assembly site membrane"/>
    <property type="evidence" value="ECO:0000318"/>
    <property type="project" value="GO_Central"/>
</dbReference>
<dbReference type="GO" id="GO:0080025">
    <property type="term" value="F:phosphatidylinositol-3,5-bisphosphate binding"/>
    <property type="evidence" value="ECO:0000250"/>
    <property type="project" value="UniProtKB"/>
</dbReference>
<dbReference type="GO" id="GO:0032266">
    <property type="term" value="F:phosphatidylinositol-3-phosphate binding"/>
    <property type="evidence" value="ECO:0000250"/>
    <property type="project" value="UniProtKB"/>
</dbReference>
<dbReference type="GO" id="GO:0030674">
    <property type="term" value="F:protein-macromolecule adaptor activity"/>
    <property type="evidence" value="ECO:0000318"/>
    <property type="project" value="GO_Central"/>
</dbReference>
<dbReference type="GO" id="GO:0000045">
    <property type="term" value="P:autophagosome assembly"/>
    <property type="evidence" value="ECO:0000250"/>
    <property type="project" value="UniProtKB"/>
</dbReference>
<dbReference type="GO" id="GO:0000422">
    <property type="term" value="P:autophagy of mitochondrion"/>
    <property type="evidence" value="ECO:0000318"/>
    <property type="project" value="GO_Central"/>
</dbReference>
<dbReference type="GO" id="GO:0009267">
    <property type="term" value="P:cellular response to starvation"/>
    <property type="evidence" value="ECO:0000250"/>
    <property type="project" value="UniProtKB"/>
</dbReference>
<dbReference type="GO" id="GO:0061723">
    <property type="term" value="P:glycophagy"/>
    <property type="evidence" value="ECO:0000318"/>
    <property type="project" value="GO_Central"/>
</dbReference>
<dbReference type="GO" id="GO:0044804">
    <property type="term" value="P:nucleophagy"/>
    <property type="evidence" value="ECO:0000318"/>
    <property type="project" value="GO_Central"/>
</dbReference>
<dbReference type="GO" id="GO:0000425">
    <property type="term" value="P:pexophagy"/>
    <property type="evidence" value="ECO:0000318"/>
    <property type="project" value="GO_Central"/>
</dbReference>
<dbReference type="GO" id="GO:2000786">
    <property type="term" value="P:positive regulation of autophagosome assembly"/>
    <property type="evidence" value="ECO:0000250"/>
    <property type="project" value="UniProtKB"/>
</dbReference>
<dbReference type="GO" id="GO:0034497">
    <property type="term" value="P:protein localization to phagophore assembly site"/>
    <property type="evidence" value="ECO:0000318"/>
    <property type="project" value="GO_Central"/>
</dbReference>
<dbReference type="FunFam" id="2.130.10.10:FF:000145">
    <property type="entry name" value="WD repeat domain phosphoinositide-interacting protein 2"/>
    <property type="match status" value="1"/>
</dbReference>
<dbReference type="Gene3D" id="2.130.10.10">
    <property type="entry name" value="YVTN repeat-like/Quinoprotein amine dehydrogenase"/>
    <property type="match status" value="1"/>
</dbReference>
<dbReference type="InterPro" id="IPR048720">
    <property type="entry name" value="PROPPIN"/>
</dbReference>
<dbReference type="InterPro" id="IPR015943">
    <property type="entry name" value="WD40/YVTN_repeat-like_dom_sf"/>
</dbReference>
<dbReference type="InterPro" id="IPR036322">
    <property type="entry name" value="WD40_repeat_dom_sf"/>
</dbReference>
<dbReference type="InterPro" id="IPR001680">
    <property type="entry name" value="WD40_rpt"/>
</dbReference>
<dbReference type="PANTHER" id="PTHR11227">
    <property type="entry name" value="WD-REPEAT PROTEIN INTERACTING WITH PHOSPHOINOSIDES WIPI -RELATED"/>
    <property type="match status" value="1"/>
</dbReference>
<dbReference type="Pfam" id="PF21032">
    <property type="entry name" value="PROPPIN"/>
    <property type="match status" value="1"/>
</dbReference>
<dbReference type="SMART" id="SM00320">
    <property type="entry name" value="WD40"/>
    <property type="match status" value="3"/>
</dbReference>
<dbReference type="SUPFAM" id="SSF50978">
    <property type="entry name" value="WD40 repeat-like"/>
    <property type="match status" value="1"/>
</dbReference>